<proteinExistence type="predicted"/>
<protein>
    <recommendedName>
        <fullName>Uncharacterized protein SSO2899</fullName>
    </recommendedName>
</protein>
<name>Y2899_SACS2</name>
<accession>Q97UU4</accession>
<sequence>MYKNPYGLEIYLIKGDITEIEADAIVNAANSYLQHGGGVAYAIVRKGGYIIQKESDEYVKKFGPVPVGEVAVTSAGKLKAKYVIHAVGPRYGIEGEDKLESAIFKSLLKADELSLSSIAMPAISTGIYGYPFEICARIMANVLKGYKPKTLRKVMICLYTKDAYDVFKSIFNSILKN</sequence>
<evidence type="ECO:0000255" key="1">
    <source>
        <dbReference type="PROSITE-ProRule" id="PRU00490"/>
    </source>
</evidence>
<gene>
    <name type="ordered locus">SSO2899</name>
</gene>
<reference key="1">
    <citation type="journal article" date="2001" name="Proc. Natl. Acad. Sci. U.S.A.">
        <title>The complete genome of the crenarchaeon Sulfolobus solfataricus P2.</title>
        <authorList>
            <person name="She Q."/>
            <person name="Singh R.K."/>
            <person name="Confalonieri F."/>
            <person name="Zivanovic Y."/>
            <person name="Allard G."/>
            <person name="Awayez M.J."/>
            <person name="Chan-Weiher C.C.-Y."/>
            <person name="Clausen I.G."/>
            <person name="Curtis B.A."/>
            <person name="De Moors A."/>
            <person name="Erauso G."/>
            <person name="Fletcher C."/>
            <person name="Gordon P.M.K."/>
            <person name="Heikamp-de Jong I."/>
            <person name="Jeffries A.C."/>
            <person name="Kozera C.J."/>
            <person name="Medina N."/>
            <person name="Peng X."/>
            <person name="Thi-Ngoc H.P."/>
            <person name="Redder P."/>
            <person name="Schenk M.E."/>
            <person name="Theriault C."/>
            <person name="Tolstrup N."/>
            <person name="Charlebois R.L."/>
            <person name="Doolittle W.F."/>
            <person name="Duguet M."/>
            <person name="Gaasterland T."/>
            <person name="Garrett R.A."/>
            <person name="Ragan M.A."/>
            <person name="Sensen C.W."/>
            <person name="Van der Oost J."/>
        </authorList>
    </citation>
    <scope>NUCLEOTIDE SEQUENCE [LARGE SCALE GENOMIC DNA]</scope>
    <source>
        <strain>ATCC 35092 / DSM 1617 / JCM 11322 / P2</strain>
    </source>
</reference>
<keyword id="KW-1185">Reference proteome</keyword>
<dbReference type="EMBL" id="AE006641">
    <property type="protein sequence ID" value="AAK43008.1"/>
    <property type="molecule type" value="Genomic_DNA"/>
</dbReference>
<dbReference type="PIR" id="A99469">
    <property type="entry name" value="A99469"/>
</dbReference>
<dbReference type="RefSeq" id="WP_009993055.1">
    <property type="nucleotide sequence ID" value="NC_002754.1"/>
</dbReference>
<dbReference type="SMR" id="Q97UU4"/>
<dbReference type="FunCoup" id="Q97UU4">
    <property type="interactions" value="71"/>
</dbReference>
<dbReference type="STRING" id="273057.SSO2899"/>
<dbReference type="PaxDb" id="273057-SSO2899"/>
<dbReference type="EnsemblBacteria" id="AAK43008">
    <property type="protein sequence ID" value="AAK43008"/>
    <property type="gene ID" value="SSO2899"/>
</dbReference>
<dbReference type="KEGG" id="sso:SSO2899"/>
<dbReference type="PATRIC" id="fig|273057.12.peg.2989"/>
<dbReference type="eggNOG" id="arCOG04225">
    <property type="taxonomic scope" value="Archaea"/>
</dbReference>
<dbReference type="HOGENOM" id="CLU_046550_7_0_2"/>
<dbReference type="InParanoid" id="Q97UU4"/>
<dbReference type="PhylomeDB" id="Q97UU4"/>
<dbReference type="Proteomes" id="UP000001974">
    <property type="component" value="Chromosome"/>
</dbReference>
<dbReference type="CDD" id="cd02907">
    <property type="entry name" value="Macro_Af1521_BAL-like"/>
    <property type="match status" value="1"/>
</dbReference>
<dbReference type="Gene3D" id="3.40.220.10">
    <property type="entry name" value="Leucine Aminopeptidase, subunit E, domain 1"/>
    <property type="match status" value="1"/>
</dbReference>
<dbReference type="InterPro" id="IPR002589">
    <property type="entry name" value="Macro_dom"/>
</dbReference>
<dbReference type="InterPro" id="IPR043472">
    <property type="entry name" value="Macro_dom-like"/>
</dbReference>
<dbReference type="NCBIfam" id="NF001665">
    <property type="entry name" value="PRK00431.2-1"/>
    <property type="match status" value="1"/>
</dbReference>
<dbReference type="NCBIfam" id="NF001667">
    <property type="entry name" value="PRK00431.2-3"/>
    <property type="match status" value="1"/>
</dbReference>
<dbReference type="NCBIfam" id="NF001668">
    <property type="entry name" value="PRK00431.2-4"/>
    <property type="match status" value="1"/>
</dbReference>
<dbReference type="PANTHER" id="PTHR11106">
    <property type="entry name" value="GANGLIOSIDE INDUCED DIFFERENTIATION ASSOCIATED PROTEIN 2-RELATED"/>
    <property type="match status" value="1"/>
</dbReference>
<dbReference type="PANTHER" id="PTHR11106:SF111">
    <property type="entry name" value="MACRO DOMAIN-CONTAINING PROTEIN"/>
    <property type="match status" value="1"/>
</dbReference>
<dbReference type="Pfam" id="PF01661">
    <property type="entry name" value="Macro"/>
    <property type="match status" value="1"/>
</dbReference>
<dbReference type="SMART" id="SM00506">
    <property type="entry name" value="A1pp"/>
    <property type="match status" value="1"/>
</dbReference>
<dbReference type="SUPFAM" id="SSF52949">
    <property type="entry name" value="Macro domain-like"/>
    <property type="match status" value="1"/>
</dbReference>
<dbReference type="PROSITE" id="PS51154">
    <property type="entry name" value="MACRO"/>
    <property type="match status" value="1"/>
</dbReference>
<feature type="chain" id="PRO_0000089237" description="Uncharacterized protein SSO2899">
    <location>
        <begin position="1"/>
        <end position="177"/>
    </location>
</feature>
<feature type="domain" description="Macro" evidence="1">
    <location>
        <begin position="1"/>
        <end position="175"/>
    </location>
</feature>
<organism>
    <name type="scientific">Saccharolobus solfataricus (strain ATCC 35092 / DSM 1617 / JCM 11322 / P2)</name>
    <name type="common">Sulfolobus solfataricus</name>
    <dbReference type="NCBI Taxonomy" id="273057"/>
    <lineage>
        <taxon>Archaea</taxon>
        <taxon>Thermoproteota</taxon>
        <taxon>Thermoprotei</taxon>
        <taxon>Sulfolobales</taxon>
        <taxon>Sulfolobaceae</taxon>
        <taxon>Saccharolobus</taxon>
    </lineage>
</organism>